<gene>
    <name type="primary">gmuF</name>
    <name type="synonym">ydhS</name>
    <name type="ordered locus">BSU05870</name>
</gene>
<dbReference type="EC" id="5.3.1.8"/>
<dbReference type="EMBL" id="D88802">
    <property type="protein sequence ID" value="BAA19711.1"/>
    <property type="molecule type" value="Genomic_DNA"/>
</dbReference>
<dbReference type="EMBL" id="AL009126">
    <property type="protein sequence ID" value="CAB12406.1"/>
    <property type="molecule type" value="Genomic_DNA"/>
</dbReference>
<dbReference type="PIR" id="G69785">
    <property type="entry name" value="G69785"/>
</dbReference>
<dbReference type="RefSeq" id="NP_388468.1">
    <property type="nucleotide sequence ID" value="NC_000964.3"/>
</dbReference>
<dbReference type="SMR" id="O05511"/>
<dbReference type="FunCoup" id="O05511">
    <property type="interactions" value="253"/>
</dbReference>
<dbReference type="STRING" id="224308.BSU05870"/>
<dbReference type="PaxDb" id="224308-BSU05870"/>
<dbReference type="EnsemblBacteria" id="CAB12406">
    <property type="protein sequence ID" value="CAB12406"/>
    <property type="gene ID" value="BSU_05870"/>
</dbReference>
<dbReference type="GeneID" id="938028"/>
<dbReference type="KEGG" id="bsu:BSU05870"/>
<dbReference type="PATRIC" id="fig|224308.179.peg.631"/>
<dbReference type="eggNOG" id="COG1482">
    <property type="taxonomic scope" value="Bacteria"/>
</dbReference>
<dbReference type="InParanoid" id="O05511"/>
<dbReference type="OrthoDB" id="9808275at2"/>
<dbReference type="PhylomeDB" id="O05511"/>
<dbReference type="BioCyc" id="BSUB:BSU05870-MONOMER"/>
<dbReference type="Proteomes" id="UP000001570">
    <property type="component" value="Chromosome"/>
</dbReference>
<dbReference type="GO" id="GO:0004476">
    <property type="term" value="F:mannose-6-phosphate isomerase activity"/>
    <property type="evidence" value="ECO:0007669"/>
    <property type="project" value="UniProtKB-EC"/>
</dbReference>
<dbReference type="GO" id="GO:0008270">
    <property type="term" value="F:zinc ion binding"/>
    <property type="evidence" value="ECO:0007669"/>
    <property type="project" value="InterPro"/>
</dbReference>
<dbReference type="GO" id="GO:0005975">
    <property type="term" value="P:carbohydrate metabolic process"/>
    <property type="evidence" value="ECO:0007669"/>
    <property type="project" value="InterPro"/>
</dbReference>
<dbReference type="CDD" id="cd07010">
    <property type="entry name" value="cupin_PMI_type_I_N_bac"/>
    <property type="match status" value="1"/>
</dbReference>
<dbReference type="FunFam" id="2.60.120.10:FF:000070">
    <property type="entry name" value="Mannose-6-phosphate isomerase"/>
    <property type="match status" value="1"/>
</dbReference>
<dbReference type="Gene3D" id="2.60.120.10">
    <property type="entry name" value="Jelly Rolls"/>
    <property type="match status" value="2"/>
</dbReference>
<dbReference type="InterPro" id="IPR051804">
    <property type="entry name" value="Carb_Metab_Reg_Kinase/Isom"/>
</dbReference>
<dbReference type="InterPro" id="IPR001250">
    <property type="entry name" value="Man6P_Isoase-1"/>
</dbReference>
<dbReference type="InterPro" id="IPR014628">
    <property type="entry name" value="Man6P_isomerase_Firm_short"/>
</dbReference>
<dbReference type="InterPro" id="IPR049071">
    <property type="entry name" value="MPI_cupin_dom"/>
</dbReference>
<dbReference type="InterPro" id="IPR046457">
    <property type="entry name" value="PMI_typeI_cat"/>
</dbReference>
<dbReference type="InterPro" id="IPR014710">
    <property type="entry name" value="RmlC-like_jellyroll"/>
</dbReference>
<dbReference type="InterPro" id="IPR011051">
    <property type="entry name" value="RmlC_Cupin_sf"/>
</dbReference>
<dbReference type="NCBIfam" id="TIGR00218">
    <property type="entry name" value="manA"/>
    <property type="match status" value="2"/>
</dbReference>
<dbReference type="PANTHER" id="PTHR42742:SF3">
    <property type="entry name" value="FRUCTOKINASE"/>
    <property type="match status" value="1"/>
</dbReference>
<dbReference type="PANTHER" id="PTHR42742">
    <property type="entry name" value="TRANSCRIPTIONAL REPRESSOR MPRA"/>
    <property type="match status" value="1"/>
</dbReference>
<dbReference type="Pfam" id="PF21621">
    <property type="entry name" value="MPI_cupin_dom"/>
    <property type="match status" value="1"/>
</dbReference>
<dbReference type="Pfam" id="PF20511">
    <property type="entry name" value="PMI_typeI_cat"/>
    <property type="match status" value="1"/>
</dbReference>
<dbReference type="PIRSF" id="PIRSF036894">
    <property type="entry name" value="PMI_Firm_short"/>
    <property type="match status" value="1"/>
</dbReference>
<dbReference type="SUPFAM" id="SSF51182">
    <property type="entry name" value="RmlC-like cupins"/>
    <property type="match status" value="1"/>
</dbReference>
<evidence type="ECO:0000250" key="1"/>
<evidence type="ECO:0000250" key="2">
    <source>
        <dbReference type="UniProtKB" id="P34948"/>
    </source>
</evidence>
<evidence type="ECO:0000250" key="3">
    <source>
        <dbReference type="UniProtKB" id="P39841"/>
    </source>
</evidence>
<evidence type="ECO:0000269" key="4">
    <source>
    </source>
</evidence>
<evidence type="ECO:0000305" key="5"/>
<accession>O05511</accession>
<accession>Q797D7</accession>
<name>MANA2_BACSU</name>
<keyword id="KW-0119">Carbohydrate metabolism</keyword>
<keyword id="KW-0413">Isomerase</keyword>
<keyword id="KW-0479">Metal-binding</keyword>
<keyword id="KW-1185">Reference proteome</keyword>
<keyword id="KW-0862">Zinc</keyword>
<proteinExistence type="evidence at protein level"/>
<comment type="function">
    <text evidence="4">Seems to be involved in the degradation of glucomannan.</text>
</comment>
<comment type="catalytic activity">
    <reaction>
        <text>D-mannose 6-phosphate = D-fructose 6-phosphate</text>
        <dbReference type="Rhea" id="RHEA:12356"/>
        <dbReference type="ChEBI" id="CHEBI:58735"/>
        <dbReference type="ChEBI" id="CHEBI:61527"/>
        <dbReference type="EC" id="5.3.1.8"/>
    </reaction>
</comment>
<comment type="cofactor">
    <cofactor evidence="1">
        <name>Zn(2+)</name>
        <dbReference type="ChEBI" id="CHEBI:29105"/>
    </cofactor>
    <text evidence="1">Binds 1 zinc ion per subunit.</text>
</comment>
<comment type="induction">
    <text evidence="4">Up-regulated by konjac glucomannan and by cellobiose and mannobiose, the possible degradation products of glucomannan. Repressed by glucose via the carbon catabolite repression system. Also repressed by GmuR.</text>
</comment>
<comment type="similarity">
    <text evidence="5">Belongs to the mannose-6-phosphate isomerase type 1 family.</text>
</comment>
<protein>
    <recommendedName>
        <fullName>Probable mannose-6-phosphate isomerase GmuF</fullName>
        <ecNumber>5.3.1.8</ecNumber>
    </recommendedName>
    <alternativeName>
        <fullName>Glucomannan utilization protein F</fullName>
    </alternativeName>
    <alternativeName>
        <fullName>Phosphohexomutase</fullName>
    </alternativeName>
    <alternativeName>
        <fullName>Phosphomannose isomerase</fullName>
        <shortName>PMI</shortName>
    </alternativeName>
</protein>
<feature type="chain" id="PRO_0000372435" description="Probable mannose-6-phosphate isomerase GmuF">
    <location>
        <begin position="1"/>
        <end position="315"/>
    </location>
</feature>
<feature type="active site" evidence="2">
    <location>
        <position position="192"/>
    </location>
</feature>
<feature type="binding site" evidence="1">
    <location>
        <position position="95"/>
    </location>
    <ligand>
        <name>Zn(2+)</name>
        <dbReference type="ChEBI" id="CHEBI:29105"/>
    </ligand>
</feature>
<feature type="binding site" evidence="3">
    <location>
        <position position="97"/>
    </location>
    <ligand>
        <name>Zn(2+)</name>
        <dbReference type="ChEBI" id="CHEBI:29105"/>
    </ligand>
</feature>
<feature type="binding site" evidence="3">
    <location>
        <position position="115"/>
    </location>
    <ligand>
        <name>Zn(2+)</name>
        <dbReference type="ChEBI" id="CHEBI:29105"/>
    </ligand>
</feature>
<feature type="binding site" evidence="3">
    <location>
        <position position="172"/>
    </location>
    <ligand>
        <name>Zn(2+)</name>
        <dbReference type="ChEBI" id="CHEBI:29105"/>
    </ligand>
</feature>
<sequence>MTHPLFLEPVFKERLWGGTKLRDAFGYAIPSQKTGECWAVSAHAHGSSSVKNGPLAGKTLDQVWKDHPEIFGFPDGKVFPLLVKLLDANMDLSVQVHPDDDYAKLHENGDLGKTECWYIIDCKDDAELILGHHASTKEEFKQRIESGDWNGLLRRIKIKPGDFFYVPSGTLHALCKGTLVLEIQQNSDTTYRVYDYDRCNDQGQKRTLHIEKAMEVITIPHIDKVHTPEVKEVGNAEIIVYVQSDYFSVYKWKISGRAAFPSYQTYLLGSVLSGSGRIINNGIQYECNAGSHFILPAHFGEFTIEGTCEFMISHP</sequence>
<organism>
    <name type="scientific">Bacillus subtilis (strain 168)</name>
    <dbReference type="NCBI Taxonomy" id="224308"/>
    <lineage>
        <taxon>Bacteria</taxon>
        <taxon>Bacillati</taxon>
        <taxon>Bacillota</taxon>
        <taxon>Bacilli</taxon>
        <taxon>Bacillales</taxon>
        <taxon>Bacillaceae</taxon>
        <taxon>Bacillus</taxon>
    </lineage>
</organism>
<reference key="1">
    <citation type="journal article" date="1997" name="Microbiology">
        <title>Nucleotide sequence and analysis of the phoB-rrnE-groESL region of the Bacillus subtilis chromosome.</title>
        <authorList>
            <person name="Sadaie Y."/>
            <person name="Yata K."/>
            <person name="Fujita M."/>
            <person name="Sagai H."/>
            <person name="Itaya M."/>
            <person name="Kasahara Y."/>
            <person name="Ogasawara N."/>
        </authorList>
    </citation>
    <scope>NUCLEOTIDE SEQUENCE [GENOMIC DNA]</scope>
    <source>
        <strain>168 / JH642</strain>
    </source>
</reference>
<reference key="2">
    <citation type="journal article" date="1997" name="Nature">
        <title>The complete genome sequence of the Gram-positive bacterium Bacillus subtilis.</title>
        <authorList>
            <person name="Kunst F."/>
            <person name="Ogasawara N."/>
            <person name="Moszer I."/>
            <person name="Albertini A.M."/>
            <person name="Alloni G."/>
            <person name="Azevedo V."/>
            <person name="Bertero M.G."/>
            <person name="Bessieres P."/>
            <person name="Bolotin A."/>
            <person name="Borchert S."/>
            <person name="Borriss R."/>
            <person name="Boursier L."/>
            <person name="Brans A."/>
            <person name="Braun M."/>
            <person name="Brignell S.C."/>
            <person name="Bron S."/>
            <person name="Brouillet S."/>
            <person name="Bruschi C.V."/>
            <person name="Caldwell B."/>
            <person name="Capuano V."/>
            <person name="Carter N.M."/>
            <person name="Choi S.-K."/>
            <person name="Codani J.-J."/>
            <person name="Connerton I.F."/>
            <person name="Cummings N.J."/>
            <person name="Daniel R.A."/>
            <person name="Denizot F."/>
            <person name="Devine K.M."/>
            <person name="Duesterhoeft A."/>
            <person name="Ehrlich S.D."/>
            <person name="Emmerson P.T."/>
            <person name="Entian K.-D."/>
            <person name="Errington J."/>
            <person name="Fabret C."/>
            <person name="Ferrari E."/>
            <person name="Foulger D."/>
            <person name="Fritz C."/>
            <person name="Fujita M."/>
            <person name="Fujita Y."/>
            <person name="Fuma S."/>
            <person name="Galizzi A."/>
            <person name="Galleron N."/>
            <person name="Ghim S.-Y."/>
            <person name="Glaser P."/>
            <person name="Goffeau A."/>
            <person name="Golightly E.J."/>
            <person name="Grandi G."/>
            <person name="Guiseppi G."/>
            <person name="Guy B.J."/>
            <person name="Haga K."/>
            <person name="Haiech J."/>
            <person name="Harwood C.R."/>
            <person name="Henaut A."/>
            <person name="Hilbert H."/>
            <person name="Holsappel S."/>
            <person name="Hosono S."/>
            <person name="Hullo M.-F."/>
            <person name="Itaya M."/>
            <person name="Jones L.-M."/>
            <person name="Joris B."/>
            <person name="Karamata D."/>
            <person name="Kasahara Y."/>
            <person name="Klaerr-Blanchard M."/>
            <person name="Klein C."/>
            <person name="Kobayashi Y."/>
            <person name="Koetter P."/>
            <person name="Koningstein G."/>
            <person name="Krogh S."/>
            <person name="Kumano M."/>
            <person name="Kurita K."/>
            <person name="Lapidus A."/>
            <person name="Lardinois S."/>
            <person name="Lauber J."/>
            <person name="Lazarevic V."/>
            <person name="Lee S.-M."/>
            <person name="Levine A."/>
            <person name="Liu H."/>
            <person name="Masuda S."/>
            <person name="Mauel C."/>
            <person name="Medigue C."/>
            <person name="Medina N."/>
            <person name="Mellado R.P."/>
            <person name="Mizuno M."/>
            <person name="Moestl D."/>
            <person name="Nakai S."/>
            <person name="Noback M."/>
            <person name="Noone D."/>
            <person name="O'Reilly M."/>
            <person name="Ogawa K."/>
            <person name="Ogiwara A."/>
            <person name="Oudega B."/>
            <person name="Park S.-H."/>
            <person name="Parro V."/>
            <person name="Pohl T.M."/>
            <person name="Portetelle D."/>
            <person name="Porwollik S."/>
            <person name="Prescott A.M."/>
            <person name="Presecan E."/>
            <person name="Pujic P."/>
            <person name="Purnelle B."/>
            <person name="Rapoport G."/>
            <person name="Rey M."/>
            <person name="Reynolds S."/>
            <person name="Rieger M."/>
            <person name="Rivolta C."/>
            <person name="Rocha E."/>
            <person name="Roche B."/>
            <person name="Rose M."/>
            <person name="Sadaie Y."/>
            <person name="Sato T."/>
            <person name="Scanlan E."/>
            <person name="Schleich S."/>
            <person name="Schroeter R."/>
            <person name="Scoffone F."/>
            <person name="Sekiguchi J."/>
            <person name="Sekowska A."/>
            <person name="Seror S.J."/>
            <person name="Serror P."/>
            <person name="Shin B.-S."/>
            <person name="Soldo B."/>
            <person name="Sorokin A."/>
            <person name="Tacconi E."/>
            <person name="Takagi T."/>
            <person name="Takahashi H."/>
            <person name="Takemaru K."/>
            <person name="Takeuchi M."/>
            <person name="Tamakoshi A."/>
            <person name="Tanaka T."/>
            <person name="Terpstra P."/>
            <person name="Tognoni A."/>
            <person name="Tosato V."/>
            <person name="Uchiyama S."/>
            <person name="Vandenbol M."/>
            <person name="Vannier F."/>
            <person name="Vassarotti A."/>
            <person name="Viari A."/>
            <person name="Wambutt R."/>
            <person name="Wedler E."/>
            <person name="Wedler H."/>
            <person name="Weitzenegger T."/>
            <person name="Winters P."/>
            <person name="Wipat A."/>
            <person name="Yamamoto H."/>
            <person name="Yamane K."/>
            <person name="Yasumoto K."/>
            <person name="Yata K."/>
            <person name="Yoshida K."/>
            <person name="Yoshikawa H.-F."/>
            <person name="Zumstein E."/>
            <person name="Yoshikawa H."/>
            <person name="Danchin A."/>
        </authorList>
    </citation>
    <scope>NUCLEOTIDE SEQUENCE [LARGE SCALE GENOMIC DNA]</scope>
    <source>
        <strain>168</strain>
    </source>
</reference>
<reference key="3">
    <citation type="journal article" date="2008" name="FEMS Microbiol. Lett.">
        <title>Glucomannan utilization operon of Bacillus subtilis.</title>
        <authorList>
            <person name="Sadaie Y."/>
            <person name="Nakadate H."/>
            <person name="Fukui R."/>
            <person name="Yee L.M."/>
            <person name="Asai K."/>
        </authorList>
    </citation>
    <scope>INDUCTION</scope>
    <scope>FUNCTION IN GLUCOMANNAN UTILIZATION</scope>
    <source>
        <strain>168</strain>
    </source>
</reference>